<proteinExistence type="inferred from homology"/>
<protein>
    <recommendedName>
        <fullName evidence="1">Large ribosomal subunit protein uL11</fullName>
    </recommendedName>
    <alternativeName>
        <fullName evidence="2">50S ribosomal protein L11</fullName>
    </alternativeName>
</protein>
<evidence type="ECO:0000255" key="1">
    <source>
        <dbReference type="HAMAP-Rule" id="MF_00736"/>
    </source>
</evidence>
<evidence type="ECO:0000305" key="2"/>
<dbReference type="EMBL" id="BA000003">
    <property type="protein sequence ID" value="BAB12765.1"/>
    <property type="molecule type" value="Genomic_DNA"/>
</dbReference>
<dbReference type="RefSeq" id="NP_239879.1">
    <property type="nucleotide sequence ID" value="NC_002528.1"/>
</dbReference>
<dbReference type="RefSeq" id="WP_009873999.1">
    <property type="nucleotide sequence ID" value="NZ_AP036055.1"/>
</dbReference>
<dbReference type="SMR" id="P57150"/>
<dbReference type="STRING" id="563178.BUAP5A_037"/>
<dbReference type="EnsemblBacteria" id="BAB12765">
    <property type="protein sequence ID" value="BAB12765"/>
    <property type="gene ID" value="BAB12765"/>
</dbReference>
<dbReference type="KEGG" id="buc:BU038"/>
<dbReference type="PATRIC" id="fig|107806.10.peg.51"/>
<dbReference type="eggNOG" id="COG0080">
    <property type="taxonomic scope" value="Bacteria"/>
</dbReference>
<dbReference type="HOGENOM" id="CLU_074237_2_0_6"/>
<dbReference type="Proteomes" id="UP000001806">
    <property type="component" value="Chromosome"/>
</dbReference>
<dbReference type="GO" id="GO:0022625">
    <property type="term" value="C:cytosolic large ribosomal subunit"/>
    <property type="evidence" value="ECO:0007669"/>
    <property type="project" value="TreeGrafter"/>
</dbReference>
<dbReference type="GO" id="GO:0070180">
    <property type="term" value="F:large ribosomal subunit rRNA binding"/>
    <property type="evidence" value="ECO:0007669"/>
    <property type="project" value="UniProtKB-UniRule"/>
</dbReference>
<dbReference type="GO" id="GO:0003735">
    <property type="term" value="F:structural constituent of ribosome"/>
    <property type="evidence" value="ECO:0007669"/>
    <property type="project" value="InterPro"/>
</dbReference>
<dbReference type="GO" id="GO:0006412">
    <property type="term" value="P:translation"/>
    <property type="evidence" value="ECO:0007669"/>
    <property type="project" value="UniProtKB-UniRule"/>
</dbReference>
<dbReference type="CDD" id="cd00349">
    <property type="entry name" value="Ribosomal_L11"/>
    <property type="match status" value="1"/>
</dbReference>
<dbReference type="FunFam" id="1.10.10.250:FF:000001">
    <property type="entry name" value="50S ribosomal protein L11"/>
    <property type="match status" value="1"/>
</dbReference>
<dbReference type="FunFam" id="3.30.1550.10:FF:000001">
    <property type="entry name" value="50S ribosomal protein L11"/>
    <property type="match status" value="1"/>
</dbReference>
<dbReference type="Gene3D" id="1.10.10.250">
    <property type="entry name" value="Ribosomal protein L11, C-terminal domain"/>
    <property type="match status" value="1"/>
</dbReference>
<dbReference type="Gene3D" id="3.30.1550.10">
    <property type="entry name" value="Ribosomal protein L11/L12, N-terminal domain"/>
    <property type="match status" value="1"/>
</dbReference>
<dbReference type="HAMAP" id="MF_00736">
    <property type="entry name" value="Ribosomal_uL11"/>
    <property type="match status" value="1"/>
</dbReference>
<dbReference type="InterPro" id="IPR000911">
    <property type="entry name" value="Ribosomal_uL11"/>
</dbReference>
<dbReference type="InterPro" id="IPR006519">
    <property type="entry name" value="Ribosomal_uL11_bac-typ"/>
</dbReference>
<dbReference type="InterPro" id="IPR020783">
    <property type="entry name" value="Ribosomal_uL11_C"/>
</dbReference>
<dbReference type="InterPro" id="IPR036769">
    <property type="entry name" value="Ribosomal_uL11_C_sf"/>
</dbReference>
<dbReference type="InterPro" id="IPR020785">
    <property type="entry name" value="Ribosomal_uL11_CS"/>
</dbReference>
<dbReference type="InterPro" id="IPR020784">
    <property type="entry name" value="Ribosomal_uL11_N"/>
</dbReference>
<dbReference type="InterPro" id="IPR036796">
    <property type="entry name" value="Ribosomal_uL11_N_sf"/>
</dbReference>
<dbReference type="NCBIfam" id="TIGR01632">
    <property type="entry name" value="L11_bact"/>
    <property type="match status" value="1"/>
</dbReference>
<dbReference type="PANTHER" id="PTHR11661">
    <property type="entry name" value="60S RIBOSOMAL PROTEIN L12"/>
    <property type="match status" value="1"/>
</dbReference>
<dbReference type="PANTHER" id="PTHR11661:SF1">
    <property type="entry name" value="LARGE RIBOSOMAL SUBUNIT PROTEIN UL11M"/>
    <property type="match status" value="1"/>
</dbReference>
<dbReference type="Pfam" id="PF00298">
    <property type="entry name" value="Ribosomal_L11"/>
    <property type="match status" value="1"/>
</dbReference>
<dbReference type="Pfam" id="PF03946">
    <property type="entry name" value="Ribosomal_L11_N"/>
    <property type="match status" value="1"/>
</dbReference>
<dbReference type="SMART" id="SM00649">
    <property type="entry name" value="RL11"/>
    <property type="match status" value="1"/>
</dbReference>
<dbReference type="SUPFAM" id="SSF54747">
    <property type="entry name" value="Ribosomal L11/L12e N-terminal domain"/>
    <property type="match status" value="1"/>
</dbReference>
<dbReference type="SUPFAM" id="SSF46906">
    <property type="entry name" value="Ribosomal protein L11, C-terminal domain"/>
    <property type="match status" value="1"/>
</dbReference>
<dbReference type="PROSITE" id="PS00359">
    <property type="entry name" value="RIBOSOMAL_L11"/>
    <property type="match status" value="1"/>
</dbReference>
<accession>P57150</accession>
<organism>
    <name type="scientific">Buchnera aphidicola subsp. Acyrthosiphon pisum (strain APS)</name>
    <name type="common">Acyrthosiphon pisum symbiotic bacterium</name>
    <dbReference type="NCBI Taxonomy" id="107806"/>
    <lineage>
        <taxon>Bacteria</taxon>
        <taxon>Pseudomonadati</taxon>
        <taxon>Pseudomonadota</taxon>
        <taxon>Gammaproteobacteria</taxon>
        <taxon>Enterobacterales</taxon>
        <taxon>Erwiniaceae</taxon>
        <taxon>Buchnera</taxon>
    </lineage>
</organism>
<reference key="1">
    <citation type="journal article" date="2000" name="Nature">
        <title>Genome sequence of the endocellular bacterial symbiont of aphids Buchnera sp. APS.</title>
        <authorList>
            <person name="Shigenobu S."/>
            <person name="Watanabe H."/>
            <person name="Hattori M."/>
            <person name="Sakaki Y."/>
            <person name="Ishikawa H."/>
        </authorList>
    </citation>
    <scope>NUCLEOTIDE SEQUENCE [LARGE SCALE GENOMIC DNA]</scope>
    <source>
        <strain>APS</strain>
    </source>
</reference>
<gene>
    <name evidence="1" type="primary">rplK</name>
    <name type="ordered locus">BU038</name>
</gene>
<sequence length="142" mass="15393">MAKKIQSYIKLQVSAGAANPSPPIGPALGQKGVNIMEFCKLFNKKTENIEKGLPIPVIITVYSDRSFTFITKTPPASVLLKKLSGIKKGSSKNKSEKIGKINRSQIKEIAIIKNNDMTGSNIENMMRSIEGTAKSMGLIIEG</sequence>
<keyword id="KW-0488">Methylation</keyword>
<keyword id="KW-1185">Reference proteome</keyword>
<keyword id="KW-0687">Ribonucleoprotein</keyword>
<keyword id="KW-0689">Ribosomal protein</keyword>
<keyword id="KW-0694">RNA-binding</keyword>
<keyword id="KW-0699">rRNA-binding</keyword>
<comment type="function">
    <text evidence="1">Forms part of the ribosomal stalk which helps the ribosome interact with GTP-bound translation factors.</text>
</comment>
<comment type="subunit">
    <text evidence="1">Part of the ribosomal stalk of the 50S ribosomal subunit. Interacts with L10 and the large rRNA to form the base of the stalk. L10 forms an elongated spine to which L12 dimers bind in a sequential fashion forming a multimeric L10(L12)X complex.</text>
</comment>
<comment type="PTM">
    <text evidence="1">One or more lysine residues are methylated.</text>
</comment>
<comment type="similarity">
    <text evidence="1">Belongs to the universal ribosomal protein uL11 family.</text>
</comment>
<feature type="chain" id="PRO_0000104259" description="Large ribosomal subunit protein uL11">
    <location>
        <begin position="1"/>
        <end position="142"/>
    </location>
</feature>
<name>RL11_BUCAI</name>